<name>PSBJ_GOSHI</name>
<protein>
    <recommendedName>
        <fullName evidence="1">Photosystem II reaction center protein J</fullName>
        <shortName evidence="1">PSII-J</shortName>
    </recommendedName>
</protein>
<comment type="function">
    <text evidence="1">One of the components of the core complex of photosystem II (PSII). PSII is a light-driven water:plastoquinone oxidoreductase that uses light energy to abstract electrons from H(2)O, generating O(2) and a proton gradient subsequently used for ATP formation. It consists of a core antenna complex that captures photons, and an electron transfer chain that converts photonic excitation into a charge separation.</text>
</comment>
<comment type="subunit">
    <text evidence="1">PSII is composed of 1 copy each of membrane proteins PsbA, PsbB, PsbC, PsbD, PsbE, PsbF, PsbH, PsbI, PsbJ, PsbK, PsbL, PsbM, PsbT, PsbX, PsbY, PsbZ, Psb30/Ycf12, at least 3 peripheral proteins of the oxygen-evolving complex and a large number of cofactors. It forms dimeric complexes.</text>
</comment>
<comment type="subcellular location">
    <subcellularLocation>
        <location evidence="1">Plastid</location>
        <location evidence="1">Chloroplast thylakoid membrane</location>
        <topology evidence="1">Single-pass membrane protein</topology>
    </subcellularLocation>
</comment>
<comment type="similarity">
    <text evidence="1">Belongs to the PsbJ family.</text>
</comment>
<reference key="1">
    <citation type="journal article" date="2006" name="BMC Genomics">
        <title>The complete chloroplast genome sequence of Gossypium hirsutum: organization and phylogenetic relationships to other angiosperms.</title>
        <authorList>
            <person name="Lee S.-B."/>
            <person name="Kaittanis C."/>
            <person name="Jansen R.K."/>
            <person name="Hostetler J.B."/>
            <person name="Tallon L.J."/>
            <person name="Town C.D."/>
            <person name="Daniell H."/>
        </authorList>
    </citation>
    <scope>NUCLEOTIDE SEQUENCE [LARGE SCALE GENOMIC DNA]</scope>
    <source>
        <strain>cv. Coker 310FR</strain>
    </source>
</reference>
<dbReference type="EMBL" id="DQ345959">
    <property type="protein sequence ID" value="ABC73642.1"/>
    <property type="molecule type" value="Genomic_DNA"/>
</dbReference>
<dbReference type="RefSeq" id="YP_538949.1">
    <property type="nucleotide sequence ID" value="NC_007944.1"/>
</dbReference>
<dbReference type="SMR" id="Q2L920"/>
<dbReference type="GeneID" id="3989163"/>
<dbReference type="KEGG" id="ghi:3989163"/>
<dbReference type="Proteomes" id="UP000189702">
    <property type="component" value="Chloroplast Pltd"/>
</dbReference>
<dbReference type="GO" id="GO:0009535">
    <property type="term" value="C:chloroplast thylakoid membrane"/>
    <property type="evidence" value="ECO:0007669"/>
    <property type="project" value="UniProtKB-SubCell"/>
</dbReference>
<dbReference type="GO" id="GO:0009539">
    <property type="term" value="C:photosystem II reaction center"/>
    <property type="evidence" value="ECO:0007669"/>
    <property type="project" value="InterPro"/>
</dbReference>
<dbReference type="GO" id="GO:0015979">
    <property type="term" value="P:photosynthesis"/>
    <property type="evidence" value="ECO:0007669"/>
    <property type="project" value="UniProtKB-UniRule"/>
</dbReference>
<dbReference type="Gene3D" id="6.10.250.2070">
    <property type="match status" value="1"/>
</dbReference>
<dbReference type="HAMAP" id="MF_01305">
    <property type="entry name" value="PSII_PsbJ"/>
    <property type="match status" value="1"/>
</dbReference>
<dbReference type="InterPro" id="IPR002682">
    <property type="entry name" value="PSII_PsbJ"/>
</dbReference>
<dbReference type="InterPro" id="IPR037267">
    <property type="entry name" value="PSII_PsbJ_sf"/>
</dbReference>
<dbReference type="NCBIfam" id="NF002722">
    <property type="entry name" value="PRK02565.1"/>
    <property type="match status" value="1"/>
</dbReference>
<dbReference type="PANTHER" id="PTHR34812">
    <property type="entry name" value="PHOTOSYSTEM II REACTION CENTER PROTEIN J"/>
    <property type="match status" value="1"/>
</dbReference>
<dbReference type="PANTHER" id="PTHR34812:SF3">
    <property type="entry name" value="PHOTOSYSTEM II REACTION CENTER PROTEIN J"/>
    <property type="match status" value="1"/>
</dbReference>
<dbReference type="Pfam" id="PF01788">
    <property type="entry name" value="PsbJ"/>
    <property type="match status" value="1"/>
</dbReference>
<dbReference type="SUPFAM" id="SSF161021">
    <property type="entry name" value="Photosystem II reaction center protein J, PsbJ"/>
    <property type="match status" value="1"/>
</dbReference>
<evidence type="ECO:0000255" key="1">
    <source>
        <dbReference type="HAMAP-Rule" id="MF_01305"/>
    </source>
</evidence>
<geneLocation type="chloroplast"/>
<sequence>MADTTGRIPLWIIGTVTGIPVIGLIGIFFYGSYSGLGSSL</sequence>
<feature type="chain" id="PRO_0000276097" description="Photosystem II reaction center protein J">
    <location>
        <begin position="1"/>
        <end position="40"/>
    </location>
</feature>
<feature type="transmembrane region" description="Helical" evidence="1">
    <location>
        <begin position="8"/>
        <end position="28"/>
    </location>
</feature>
<accession>Q2L920</accession>
<organism>
    <name type="scientific">Gossypium hirsutum</name>
    <name type="common">Upland cotton</name>
    <name type="synonym">Gossypium mexicanum</name>
    <dbReference type="NCBI Taxonomy" id="3635"/>
    <lineage>
        <taxon>Eukaryota</taxon>
        <taxon>Viridiplantae</taxon>
        <taxon>Streptophyta</taxon>
        <taxon>Embryophyta</taxon>
        <taxon>Tracheophyta</taxon>
        <taxon>Spermatophyta</taxon>
        <taxon>Magnoliopsida</taxon>
        <taxon>eudicotyledons</taxon>
        <taxon>Gunneridae</taxon>
        <taxon>Pentapetalae</taxon>
        <taxon>rosids</taxon>
        <taxon>malvids</taxon>
        <taxon>Malvales</taxon>
        <taxon>Malvaceae</taxon>
        <taxon>Malvoideae</taxon>
        <taxon>Gossypium</taxon>
    </lineage>
</organism>
<proteinExistence type="inferred from homology"/>
<keyword id="KW-0150">Chloroplast</keyword>
<keyword id="KW-0472">Membrane</keyword>
<keyword id="KW-0602">Photosynthesis</keyword>
<keyword id="KW-0604">Photosystem II</keyword>
<keyword id="KW-0934">Plastid</keyword>
<keyword id="KW-0674">Reaction center</keyword>
<keyword id="KW-1185">Reference proteome</keyword>
<keyword id="KW-0793">Thylakoid</keyword>
<keyword id="KW-0812">Transmembrane</keyword>
<keyword id="KW-1133">Transmembrane helix</keyword>
<gene>
    <name evidence="1" type="primary">psbJ</name>
</gene>